<protein>
    <recommendedName>
        <fullName>Capsid protein</fullName>
    </recommendedName>
    <alternativeName>
        <fullName>Coat protein</fullName>
        <shortName>CP</shortName>
    </alternativeName>
</protein>
<gene>
    <name type="ORF">AR1</name>
    <name type="ORF">AV1</name>
</gene>
<name>CAPSD_SLCV</name>
<proteinExistence type="inferred from homology"/>
<feature type="chain" id="PRO_0000222191" description="Capsid protein">
    <location>
        <begin position="1"/>
        <end position="251"/>
    </location>
</feature>
<feature type="zinc finger region" evidence="2">
    <location>
        <begin position="63"/>
        <end position="80"/>
    </location>
</feature>
<feature type="short sequence motif" description="Bipartite nuclear localization signal" evidence="2">
    <location>
        <begin position="3"/>
        <end position="20"/>
    </location>
</feature>
<feature type="short sequence motif" description="Nuclear localization signal" evidence="2">
    <location>
        <begin position="35"/>
        <end position="49"/>
    </location>
</feature>
<feature type="short sequence motif" description="Nuclear export signal" evidence="2">
    <location>
        <begin position="96"/>
        <end position="117"/>
    </location>
</feature>
<feature type="short sequence motif" description="Bipartite nuclear localization signal" evidence="2">
    <location>
        <begin position="195"/>
        <end position="242"/>
    </location>
</feature>
<reference key="1">
    <citation type="journal article" date="1991" name="Virology">
        <title>Infectivity and complete nucleotide sequence of the cloned genomic components of a bipartite squash leaf curl geminivirus with a broad host range phenotype.</title>
        <authorList>
            <person name="Lazarowitz S.G."/>
            <person name="Lazdins I.B."/>
        </authorList>
    </citation>
    <scope>NUCLEOTIDE SEQUENCE [GENOMIC DNA]</scope>
</reference>
<accession>P27444</accession>
<organism>
    <name type="scientific">Squash leaf curl virus</name>
    <name type="common">SLCV</name>
    <dbReference type="NCBI Taxonomy" id="10829"/>
    <lineage>
        <taxon>Viruses</taxon>
        <taxon>Monodnaviria</taxon>
        <taxon>Shotokuvirae</taxon>
        <taxon>Cressdnaviricota</taxon>
        <taxon>Repensiviricetes</taxon>
        <taxon>Geplafuvirales</taxon>
        <taxon>Geminiviridae</taxon>
        <taxon>Begomovirus</taxon>
    </lineage>
</organism>
<keyword id="KW-0167">Capsid protein</keyword>
<keyword id="KW-0238">DNA-binding</keyword>
<keyword id="KW-1048">Host nucleus</keyword>
<keyword id="KW-0945">Host-virus interaction</keyword>
<keyword id="KW-0479">Metal-binding</keyword>
<keyword id="KW-1185">Reference proteome</keyword>
<keyword id="KW-1140">T=1 icosahedral capsid protein</keyword>
<keyword id="KW-1163">Viral penetration into host nucleus</keyword>
<keyword id="KW-0946">Virion</keyword>
<keyword id="KW-1160">Virus entry into host cell</keyword>
<keyword id="KW-0862">Zinc</keyword>
<keyword id="KW-0863">Zinc-finger</keyword>
<organismHost>
    <name type="scientific">Cucurbita moschata</name>
    <name type="common">Winter crookneck squash</name>
    <name type="synonym">Cucurbita pepo var. moschata</name>
    <dbReference type="NCBI Taxonomy" id="3662"/>
</organismHost>
<organismHost>
    <name type="scientific">Cucurbita pepo</name>
    <name type="common">Vegetable marrow</name>
    <name type="synonym">Summer squash</name>
    <dbReference type="NCBI Taxonomy" id="3663"/>
</organismHost>
<organismHost>
    <name type="scientific">Phaseolus vulgaris</name>
    <name type="common">Kidney bean</name>
    <name type="synonym">French bean</name>
    <dbReference type="NCBI Taxonomy" id="3885"/>
</organismHost>
<comment type="function">
    <text>Encapsidates the viral DNA into characteristic twinned ('geminate') particles. Binds the genomic viral ssDNA and shuttles it into and out of the cell nucleus. The CP of bipartite geminiviruses is not required for cell-to-cell or systemic movement.</text>
</comment>
<comment type="subunit">
    <text evidence="1">Homomultimer. Binds to single-stranded and double-stranded viral DNA. Interacts (via nuclear localization signals) with host importin alpha-1a (By similarity).</text>
</comment>
<comment type="subcellular location">
    <subcellularLocation>
        <location evidence="3">Virion</location>
    </subcellularLocation>
    <subcellularLocation>
        <location evidence="1">Host nucleus</location>
    </subcellularLocation>
    <text evidence="1">It is actively transported into the host cell nucleus. It may be exported out of the nucleus through a nuclear export signal for cell-to-cell movement and spread (By similarity).</text>
</comment>
<comment type="similarity">
    <text evidence="3">Belongs to the geminiviridae capsid protein family.</text>
</comment>
<evidence type="ECO:0000250" key="1"/>
<evidence type="ECO:0000255" key="2"/>
<evidence type="ECO:0000305" key="3"/>
<sequence>MVKRDAPWRLMAGTSKVSRSANFSPREGMGPKFNKAAAWVNRPMYRKPRIYRTMRGPDIPKGCEGPCKVQSYEQRHDISHLGKVMCISDVTRGNGITHRVGKRFCVKSVYILGKIWMDENIKLKNHTNSVMFWLVRDRRPYGTPMDFGQVFNMFDNEPSTATIKNDLRDRYQVMHRFYAKVTGGQYASNEQALVRRFWKVNNHVVYNHQEAGKYENHTENALLLYMACTHASNPVYATLKIRIYFYDSITN</sequence>
<dbReference type="EMBL" id="M38183">
    <property type="protein sequence ID" value="AAC32411.1"/>
    <property type="molecule type" value="Genomic_DNA"/>
</dbReference>
<dbReference type="PIR" id="D36785">
    <property type="entry name" value="QQCVS2"/>
</dbReference>
<dbReference type="RefSeq" id="NP_047244.1">
    <property type="nucleotide sequence ID" value="NC_001936.1"/>
</dbReference>
<dbReference type="SMR" id="P27444"/>
<dbReference type="KEGG" id="vg:956395"/>
<dbReference type="OrthoDB" id="5720at10239"/>
<dbReference type="Proteomes" id="UP000009151">
    <property type="component" value="Genome"/>
</dbReference>
<dbReference type="GO" id="GO:0043657">
    <property type="term" value="C:host cell"/>
    <property type="evidence" value="ECO:0007669"/>
    <property type="project" value="GOC"/>
</dbReference>
<dbReference type="GO" id="GO:0042025">
    <property type="term" value="C:host cell nucleus"/>
    <property type="evidence" value="ECO:0007669"/>
    <property type="project" value="UniProtKB-SubCell"/>
</dbReference>
<dbReference type="GO" id="GO:0039615">
    <property type="term" value="C:T=1 icosahedral viral capsid"/>
    <property type="evidence" value="ECO:0007669"/>
    <property type="project" value="UniProtKB-KW"/>
</dbReference>
<dbReference type="GO" id="GO:0003677">
    <property type="term" value="F:DNA binding"/>
    <property type="evidence" value="ECO:0007669"/>
    <property type="project" value="UniProtKB-KW"/>
</dbReference>
<dbReference type="GO" id="GO:0005198">
    <property type="term" value="F:structural molecule activity"/>
    <property type="evidence" value="ECO:0007669"/>
    <property type="project" value="InterPro"/>
</dbReference>
<dbReference type="GO" id="GO:0008270">
    <property type="term" value="F:zinc ion binding"/>
    <property type="evidence" value="ECO:0007669"/>
    <property type="project" value="UniProtKB-KW"/>
</dbReference>
<dbReference type="GO" id="GO:0046718">
    <property type="term" value="P:symbiont entry into host cell"/>
    <property type="evidence" value="ECO:0007669"/>
    <property type="project" value="UniProtKB-KW"/>
</dbReference>
<dbReference type="GO" id="GO:0075732">
    <property type="term" value="P:viral penetration into host nucleus"/>
    <property type="evidence" value="ECO:0007669"/>
    <property type="project" value="UniProtKB-KW"/>
</dbReference>
<dbReference type="Gene3D" id="2.60.120.20">
    <property type="match status" value="1"/>
</dbReference>
<dbReference type="InterPro" id="IPR000650">
    <property type="entry name" value="Gem_coat_AR1"/>
</dbReference>
<dbReference type="InterPro" id="IPR000263">
    <property type="entry name" value="GV_A/BR1_coat"/>
</dbReference>
<dbReference type="InterPro" id="IPR029053">
    <property type="entry name" value="Viral_coat"/>
</dbReference>
<dbReference type="Pfam" id="PF00844">
    <property type="entry name" value="Gemini_coat"/>
    <property type="match status" value="1"/>
</dbReference>
<dbReference type="PRINTS" id="PR00224">
    <property type="entry name" value="GEMCOATAR1"/>
</dbReference>
<dbReference type="PRINTS" id="PR00223">
    <property type="entry name" value="GEMCOATARBR1"/>
</dbReference>